<accession>O04203</accession>
<accession>Q8GUL9</accession>
<accession>Q8LB61</accession>
<gene>
    <name type="primary">HSPRO2</name>
    <name type="ordered locus">At2g40000</name>
    <name type="ORF">T28M21.16</name>
</gene>
<dbReference type="EMBL" id="DQ132635">
    <property type="protein sequence ID" value="ABA12453.1"/>
    <property type="molecule type" value="mRNA"/>
</dbReference>
<dbReference type="EMBL" id="AF002109">
    <property type="protein sequence ID" value="AAB95285.1"/>
    <property type="molecule type" value="Genomic_DNA"/>
</dbReference>
<dbReference type="EMBL" id="CP002685">
    <property type="protein sequence ID" value="AEC09761.1"/>
    <property type="molecule type" value="Genomic_DNA"/>
</dbReference>
<dbReference type="EMBL" id="AY080778">
    <property type="protein sequence ID" value="AAL87262.1"/>
    <property type="molecule type" value="mRNA"/>
</dbReference>
<dbReference type="EMBL" id="AY117156">
    <property type="protein sequence ID" value="AAM51231.1"/>
    <property type="molecule type" value="mRNA"/>
</dbReference>
<dbReference type="EMBL" id="BT002396">
    <property type="protein sequence ID" value="AAO00756.1"/>
    <property type="molecule type" value="mRNA"/>
</dbReference>
<dbReference type="EMBL" id="AY087407">
    <property type="protein sequence ID" value="AAM64956.1"/>
    <property type="molecule type" value="mRNA"/>
</dbReference>
<dbReference type="PIR" id="A84824">
    <property type="entry name" value="A84824"/>
</dbReference>
<dbReference type="RefSeq" id="NP_181529.1">
    <property type="nucleotide sequence ID" value="NM_129558.3"/>
</dbReference>
<dbReference type="BioGRID" id="3926">
    <property type="interactions" value="7"/>
</dbReference>
<dbReference type="FunCoup" id="O04203">
    <property type="interactions" value="97"/>
</dbReference>
<dbReference type="IntAct" id="O04203">
    <property type="interactions" value="7"/>
</dbReference>
<dbReference type="STRING" id="3702.O04203"/>
<dbReference type="GlyGen" id="O04203">
    <property type="glycosylation" value="1 site"/>
</dbReference>
<dbReference type="iPTMnet" id="O04203"/>
<dbReference type="PaxDb" id="3702-AT2G40000.1"/>
<dbReference type="ProteomicsDB" id="230252"/>
<dbReference type="EnsemblPlants" id="AT2G40000.1">
    <property type="protein sequence ID" value="AT2G40000.1"/>
    <property type="gene ID" value="AT2G40000"/>
</dbReference>
<dbReference type="GeneID" id="818588"/>
<dbReference type="Gramene" id="AT2G40000.1">
    <property type="protein sequence ID" value="AT2G40000.1"/>
    <property type="gene ID" value="AT2G40000"/>
</dbReference>
<dbReference type="KEGG" id="ath:AT2G40000"/>
<dbReference type="Araport" id="AT2G40000"/>
<dbReference type="TAIR" id="AT2G40000">
    <property type="gene designation" value="HSPRO2"/>
</dbReference>
<dbReference type="eggNOG" id="ENOG502S740">
    <property type="taxonomic scope" value="Eukaryota"/>
</dbReference>
<dbReference type="HOGENOM" id="CLU_036144_0_0_1"/>
<dbReference type="InParanoid" id="O04203"/>
<dbReference type="OMA" id="ATWYKSK"/>
<dbReference type="PhylomeDB" id="O04203"/>
<dbReference type="PRO" id="PR:O04203"/>
<dbReference type="Proteomes" id="UP000006548">
    <property type="component" value="Chromosome 2"/>
</dbReference>
<dbReference type="ExpressionAtlas" id="O04203">
    <property type="expression patterns" value="baseline and differential"/>
</dbReference>
<dbReference type="GO" id="GO:0005737">
    <property type="term" value="C:cytoplasm"/>
    <property type="evidence" value="ECO:0007669"/>
    <property type="project" value="UniProtKB-SubCell"/>
</dbReference>
<dbReference type="GO" id="GO:0020037">
    <property type="term" value="F:heme binding"/>
    <property type="evidence" value="ECO:0007669"/>
    <property type="project" value="InterPro"/>
</dbReference>
<dbReference type="GO" id="GO:0046872">
    <property type="term" value="F:metal ion binding"/>
    <property type="evidence" value="ECO:0007669"/>
    <property type="project" value="InterPro"/>
</dbReference>
<dbReference type="GO" id="GO:0071456">
    <property type="term" value="P:cellular response to hypoxia"/>
    <property type="evidence" value="ECO:0007007"/>
    <property type="project" value="TAIR"/>
</dbReference>
<dbReference type="GO" id="GO:0042742">
    <property type="term" value="P:defense response to bacterium"/>
    <property type="evidence" value="ECO:0000315"/>
    <property type="project" value="TAIR"/>
</dbReference>
<dbReference type="GO" id="GO:0019441">
    <property type="term" value="P:L-tryptophan catabolic process to kynurenine"/>
    <property type="evidence" value="ECO:0007669"/>
    <property type="project" value="InterPro"/>
</dbReference>
<dbReference type="GO" id="GO:0006979">
    <property type="term" value="P:response to oxidative stress"/>
    <property type="evidence" value="ECO:0000315"/>
    <property type="project" value="TAIR"/>
</dbReference>
<dbReference type="GO" id="GO:0009751">
    <property type="term" value="P:response to salicylic acid"/>
    <property type="evidence" value="ECO:0000270"/>
    <property type="project" value="TAIR"/>
</dbReference>
<dbReference type="Gene3D" id="1.20.58.480">
    <property type="match status" value="1"/>
</dbReference>
<dbReference type="InterPro" id="IPR009743">
    <property type="entry name" value="Hs1pro-1_C"/>
</dbReference>
<dbReference type="InterPro" id="IPR038759">
    <property type="entry name" value="HSPRO1/HSPRO2"/>
</dbReference>
<dbReference type="InterPro" id="IPR009869">
    <property type="entry name" value="HSPRO1_N"/>
</dbReference>
<dbReference type="InterPro" id="IPR037217">
    <property type="entry name" value="Trp/Indoleamine_2_3_dOase-like"/>
</dbReference>
<dbReference type="PANTHER" id="PTHR34795">
    <property type="entry name" value="NEMATODE RESISTANCE PROTEIN-LIKE HSPRO1"/>
    <property type="match status" value="1"/>
</dbReference>
<dbReference type="PANTHER" id="PTHR34795:SF4">
    <property type="entry name" value="NEMATODE RESISTANCE PROTEIN-LIKE HSPRO2"/>
    <property type="match status" value="1"/>
</dbReference>
<dbReference type="Pfam" id="PF07014">
    <property type="entry name" value="Hs1pro-1_C"/>
    <property type="match status" value="1"/>
</dbReference>
<dbReference type="Pfam" id="PF07231">
    <property type="entry name" value="Hs1pro-1_N"/>
    <property type="match status" value="1"/>
</dbReference>
<dbReference type="SUPFAM" id="SSF140959">
    <property type="entry name" value="Indolic compounds 2,3-dioxygenase-like"/>
    <property type="match status" value="1"/>
</dbReference>
<feature type="chain" id="PRO_0000412197" description="Nematode resistance protein-like HSPRO2">
    <location>
        <begin position="1"/>
        <end position="435"/>
    </location>
</feature>
<feature type="sequence conflict" description="In Ref. 4; AAO00756." evidence="4" ref="4">
    <original>C</original>
    <variation>S</variation>
    <location>
        <position position="44"/>
    </location>
</feature>
<feature type="sequence conflict" description="In Ref. 5; AAM64956." evidence="4" ref="5">
    <original>G</original>
    <variation>E</variation>
    <location>
        <position position="259"/>
    </location>
</feature>
<sequence length="435" mass="49244">MVDMDWKRKMVSSDLPNSPKLSSKLHVTIPSPFKIVPVSSPISCSAPALCSAYELYLRLPELRKLWSSRDFPQWTSEPILKPALQALEISFRLVFAVCSDTRPYINHREWNRRLDSLITKQIQLVAAICEDEEEEGISAEAPVGGGRSSLSLLPQLATWRRSEALGKKILYTIDNEMSRCKYTLGLGEQNIAGKPNLRYDAICRPNEIYSLKDNPYADHIDNHENQTLYIIHQILESWIYASGNLLNRIVSSIEEEKFGKASNDVYLLEKIWKILAEIEDLHMLMDPEDFLKLKKQLQIKSTGKNDAFCFRSKGLVEMMKMSKDLRQKVPAVLAVEVDPTGGPRLQEAAMKLYARKTECDKIHLLQGMQAVEAAAKSFFFGYRQLVAAMMGSAEMNATASQESCDSLSQIFMEPTYFPSLDAAKTFLGEFWSHLG</sequence>
<protein>
    <recommendedName>
        <fullName>Nematode resistance protein-like HSPRO2</fullName>
    </recommendedName>
    <alternativeName>
        <fullName>AKINbetagamma-interacting protein 2</fullName>
    </alternativeName>
    <alternativeName>
        <fullName>Ortholog of sugar beet HS1 PRO-1 protein 2</fullName>
    </alternativeName>
    <alternativeName>
        <fullName>Protein Hs1pro-2</fullName>
    </alternativeName>
</protein>
<organism>
    <name type="scientific">Arabidopsis thaliana</name>
    <name type="common">Mouse-ear cress</name>
    <dbReference type="NCBI Taxonomy" id="3702"/>
    <lineage>
        <taxon>Eukaryota</taxon>
        <taxon>Viridiplantae</taxon>
        <taxon>Streptophyta</taxon>
        <taxon>Embryophyta</taxon>
        <taxon>Tracheophyta</taxon>
        <taxon>Spermatophyta</taxon>
        <taxon>Magnoliopsida</taxon>
        <taxon>eudicotyledons</taxon>
        <taxon>Gunneridae</taxon>
        <taxon>Pentapetalae</taxon>
        <taxon>rosids</taxon>
        <taxon>malvids</taxon>
        <taxon>Brassicales</taxon>
        <taxon>Brassicaceae</taxon>
        <taxon>Camelineae</taxon>
        <taxon>Arabidopsis</taxon>
    </lineage>
</organism>
<comment type="function">
    <text evidence="3">Positive regulator of basal resistance.</text>
</comment>
<comment type="subunit">
    <text evidence="2">Interacts with SNF4.</text>
</comment>
<comment type="interaction">
    <interactant intactId="EBI-1153953">
        <id>O04203</id>
    </interactant>
    <interactant intactId="EBI-2360649">
        <id>Q944A6</id>
        <label>SNF4</label>
    </interactant>
    <organismsDiffer>false</organismsDiffer>
    <experiments>11</experiments>
</comment>
<comment type="subcellular location">
    <subcellularLocation>
        <location evidence="2">Cytoplasm</location>
    </subcellularLocation>
</comment>
<comment type="induction">
    <text evidence="1 3">By bacterial pathogen P.syringae pv. tomato. By Salycilic acid (SA). By the bacterial elicitor flg22.</text>
</comment>
<comment type="disruption phenotype">
    <text evidence="3">Shows high sensibility to P.syringae pv. tomato infection.</text>
</comment>
<keyword id="KW-0963">Cytoplasm</keyword>
<keyword id="KW-0611">Plant defense</keyword>
<keyword id="KW-1185">Reference proteome</keyword>
<reference key="1">
    <citation type="journal article" date="2006" name="Plant Physiol.">
        <title>AKINbetagamma contributes to SnRK1 heterotrimeric complexes and interacts with two proteins implicated in plant pathogen resistance through its KIS/GBD sequence.</title>
        <authorList>
            <person name="Gissot L."/>
            <person name="Polge C."/>
            <person name="Jossier M."/>
            <person name="Girin T."/>
            <person name="Bouly J.-P."/>
            <person name="Kreis M."/>
            <person name="Thomas M."/>
        </authorList>
    </citation>
    <scope>NUCLEOTIDE SEQUENCE [MRNA]</scope>
    <scope>INTERACTION WITH SNF4</scope>
    <scope>SUBCELLULAR LOCATION</scope>
</reference>
<reference key="2">
    <citation type="journal article" date="1999" name="Nature">
        <title>Sequence and analysis of chromosome 2 of the plant Arabidopsis thaliana.</title>
        <authorList>
            <person name="Lin X."/>
            <person name="Kaul S."/>
            <person name="Rounsley S.D."/>
            <person name="Shea T.P."/>
            <person name="Benito M.-I."/>
            <person name="Town C.D."/>
            <person name="Fujii C.Y."/>
            <person name="Mason T.M."/>
            <person name="Bowman C.L."/>
            <person name="Barnstead M.E."/>
            <person name="Feldblyum T.V."/>
            <person name="Buell C.R."/>
            <person name="Ketchum K.A."/>
            <person name="Lee J.J."/>
            <person name="Ronning C.M."/>
            <person name="Koo H.L."/>
            <person name="Moffat K.S."/>
            <person name="Cronin L.A."/>
            <person name="Shen M."/>
            <person name="Pai G."/>
            <person name="Van Aken S."/>
            <person name="Umayam L."/>
            <person name="Tallon L.J."/>
            <person name="Gill J.E."/>
            <person name="Adams M.D."/>
            <person name="Carrera A.J."/>
            <person name="Creasy T.H."/>
            <person name="Goodman H.M."/>
            <person name="Somerville C.R."/>
            <person name="Copenhaver G.P."/>
            <person name="Preuss D."/>
            <person name="Nierman W.C."/>
            <person name="White O."/>
            <person name="Eisen J.A."/>
            <person name="Salzberg S.L."/>
            <person name="Fraser C.M."/>
            <person name="Venter J.C."/>
        </authorList>
    </citation>
    <scope>NUCLEOTIDE SEQUENCE [LARGE SCALE GENOMIC DNA]</scope>
    <source>
        <strain>cv. Columbia</strain>
    </source>
</reference>
<reference key="3">
    <citation type="journal article" date="2017" name="Plant J.">
        <title>Araport11: a complete reannotation of the Arabidopsis thaliana reference genome.</title>
        <authorList>
            <person name="Cheng C.Y."/>
            <person name="Krishnakumar V."/>
            <person name="Chan A.P."/>
            <person name="Thibaud-Nissen F."/>
            <person name="Schobel S."/>
            <person name="Town C.D."/>
        </authorList>
    </citation>
    <scope>GENOME REANNOTATION</scope>
    <source>
        <strain>cv. Columbia</strain>
    </source>
</reference>
<reference key="4">
    <citation type="journal article" date="2003" name="Science">
        <title>Empirical analysis of transcriptional activity in the Arabidopsis genome.</title>
        <authorList>
            <person name="Yamada K."/>
            <person name="Lim J."/>
            <person name="Dale J.M."/>
            <person name="Chen H."/>
            <person name="Shinn P."/>
            <person name="Palm C.J."/>
            <person name="Southwick A.M."/>
            <person name="Wu H.C."/>
            <person name="Kim C.J."/>
            <person name="Nguyen M."/>
            <person name="Pham P.K."/>
            <person name="Cheuk R.F."/>
            <person name="Karlin-Newmann G."/>
            <person name="Liu S.X."/>
            <person name="Lam B."/>
            <person name="Sakano H."/>
            <person name="Wu T."/>
            <person name="Yu G."/>
            <person name="Miranda M."/>
            <person name="Quach H.L."/>
            <person name="Tripp M."/>
            <person name="Chang C.H."/>
            <person name="Lee J.M."/>
            <person name="Toriumi M.J."/>
            <person name="Chan M.M."/>
            <person name="Tang C.C."/>
            <person name="Onodera C.S."/>
            <person name="Deng J.M."/>
            <person name="Akiyama K."/>
            <person name="Ansari Y."/>
            <person name="Arakawa T."/>
            <person name="Banh J."/>
            <person name="Banno F."/>
            <person name="Bowser L."/>
            <person name="Brooks S.Y."/>
            <person name="Carninci P."/>
            <person name="Chao Q."/>
            <person name="Choy N."/>
            <person name="Enju A."/>
            <person name="Goldsmith A.D."/>
            <person name="Gurjal M."/>
            <person name="Hansen N.F."/>
            <person name="Hayashizaki Y."/>
            <person name="Johnson-Hopson C."/>
            <person name="Hsuan V.W."/>
            <person name="Iida K."/>
            <person name="Karnes M."/>
            <person name="Khan S."/>
            <person name="Koesema E."/>
            <person name="Ishida J."/>
            <person name="Jiang P.X."/>
            <person name="Jones T."/>
            <person name="Kawai J."/>
            <person name="Kamiya A."/>
            <person name="Meyers C."/>
            <person name="Nakajima M."/>
            <person name="Narusaka M."/>
            <person name="Seki M."/>
            <person name="Sakurai T."/>
            <person name="Satou M."/>
            <person name="Tamse R."/>
            <person name="Vaysberg M."/>
            <person name="Wallender E.K."/>
            <person name="Wong C."/>
            <person name="Yamamura Y."/>
            <person name="Yuan S."/>
            <person name="Shinozaki K."/>
            <person name="Davis R.W."/>
            <person name="Theologis A."/>
            <person name="Ecker J.R."/>
        </authorList>
    </citation>
    <scope>NUCLEOTIDE SEQUENCE [LARGE SCALE MRNA]</scope>
    <source>
        <strain>cv. Columbia</strain>
    </source>
</reference>
<reference key="5">
    <citation type="submission" date="2002-03" db="EMBL/GenBank/DDBJ databases">
        <title>Full-length cDNA from Arabidopsis thaliana.</title>
        <authorList>
            <person name="Brover V.V."/>
            <person name="Troukhan M.E."/>
            <person name="Alexandrov N.A."/>
            <person name="Lu Y.-P."/>
            <person name="Flavell R.B."/>
            <person name="Feldmann K.A."/>
        </authorList>
    </citation>
    <scope>NUCLEOTIDE SEQUENCE [LARGE SCALE MRNA]</scope>
</reference>
<reference key="6">
    <citation type="journal article" date="2004" name="Nature">
        <title>Bacterial disease resistance in Arabidopsis through flagellin perception.</title>
        <authorList>
            <person name="Zipfel C."/>
            <person name="Robatzek S."/>
            <person name="Navarro L."/>
            <person name="Oakeley E.J."/>
            <person name="Jones J.D.G."/>
            <person name="Felix G."/>
            <person name="Boller T."/>
        </authorList>
    </citation>
    <scope>INDUCTION BY FLG22</scope>
</reference>
<reference key="7">
    <citation type="journal article" date="2007" name="Mol. Plant Microbe Interact.">
        <title>Basal resistance against Pseudomonas syringae in Arabidopsis involves WRKY53 and a protein with homology to a nematode resistance protein.</title>
        <authorList>
            <person name="Murray S.L."/>
            <person name="Ingle R.A."/>
            <person name="Petersen L.N."/>
            <person name="Denby K.J."/>
        </authorList>
    </citation>
    <scope>FUNCTION</scope>
    <scope>DISRUPTION PHENOTYPE</scope>
    <scope>INDUCTION</scope>
</reference>
<evidence type="ECO:0000269" key="1">
    <source>
    </source>
</evidence>
<evidence type="ECO:0000269" key="2">
    <source>
    </source>
</evidence>
<evidence type="ECO:0000269" key="3">
    <source>
    </source>
</evidence>
<evidence type="ECO:0000305" key="4"/>
<proteinExistence type="evidence at protein level"/>
<name>HSPR2_ARATH</name>